<evidence type="ECO:0000255" key="1">
    <source>
        <dbReference type="HAMAP-Rule" id="MF_01312"/>
    </source>
</evidence>
<protein>
    <recommendedName>
        <fullName evidence="1">Anaerobic nitric oxide reductase flavorubredoxin</fullName>
        <shortName evidence="1">FlRd</shortName>
        <shortName evidence="1">FlavoRb</shortName>
    </recommendedName>
</protein>
<proteinExistence type="inferred from homology"/>
<comment type="function">
    <text evidence="1">Anaerobic nitric oxide reductase; uses NADH to detoxify nitric oxide (NO), protecting several 4Fe-4S NO-sensitive enzymes. Has at least 2 reductase partners, only one of which (NorW, flavorubredoxin reductase) has been identified. NO probably binds to the di-iron center; electrons enter from the NorW at rubredoxin and are transferred sequentially to the FMN center and the di-iron center. Also able to function as an aerobic oxygen reductase.</text>
</comment>
<comment type="cofactor">
    <cofactor evidence="1">
        <name>Fe cation</name>
        <dbReference type="ChEBI" id="CHEBI:24875"/>
    </cofactor>
    <text evidence="1">Binds 3 Fe cations per monomer.</text>
</comment>
<comment type="cofactor">
    <cofactor evidence="1">
        <name>FMN</name>
        <dbReference type="ChEBI" id="CHEBI:58210"/>
    </cofactor>
    <text evidence="1">Binds 1 FMN per monomer.</text>
</comment>
<comment type="pathway">
    <text evidence="1">Nitrogen metabolism; nitric oxide reduction.</text>
</comment>
<comment type="subunit">
    <text evidence="1">Homotetramer.</text>
</comment>
<comment type="subcellular location">
    <subcellularLocation>
        <location evidence="1">Cytoplasm</location>
    </subcellularLocation>
</comment>
<comment type="similarity">
    <text evidence="1">In the N-terminal section; belongs to the zinc metallo-hydrolase group 3 family.</text>
</comment>
<gene>
    <name evidence="1" type="primary">norV</name>
    <name evidence="1" type="synonym">flrD</name>
    <name type="ordered locus">ASA_4272</name>
</gene>
<reference key="1">
    <citation type="journal article" date="2008" name="BMC Genomics">
        <title>The genome of Aeromonas salmonicida subsp. salmonicida A449: insights into the evolution of a fish pathogen.</title>
        <authorList>
            <person name="Reith M.E."/>
            <person name="Singh R.K."/>
            <person name="Curtis B."/>
            <person name="Boyd J.M."/>
            <person name="Bouevitch A."/>
            <person name="Kimball J."/>
            <person name="Munholland J."/>
            <person name="Murphy C."/>
            <person name="Sarty D."/>
            <person name="Williams J."/>
            <person name="Nash J.H."/>
            <person name="Johnson S.C."/>
            <person name="Brown L.L."/>
        </authorList>
    </citation>
    <scope>NUCLEOTIDE SEQUENCE [LARGE SCALE GENOMIC DNA]</scope>
    <source>
        <strain>A449</strain>
    </source>
</reference>
<organism>
    <name type="scientific">Aeromonas salmonicida (strain A449)</name>
    <dbReference type="NCBI Taxonomy" id="382245"/>
    <lineage>
        <taxon>Bacteria</taxon>
        <taxon>Pseudomonadati</taxon>
        <taxon>Pseudomonadota</taxon>
        <taxon>Gammaproteobacteria</taxon>
        <taxon>Aeromonadales</taxon>
        <taxon>Aeromonadaceae</taxon>
        <taxon>Aeromonas</taxon>
    </lineage>
</organism>
<sequence>MTIHVKNNIHWVGQRDWEVRDFHGTEYKTHKGTSYNSYLIREGKNVLIDTVDHKFSREFVQNLAAEIDLASIDVIVINHAEEDHAGALTELMARIPGTPIYCTHNAIDSITGHHHHPEWNFHPVKTGDSLDIGNGKQLVFIETPMLHWPDSMMTYMTEDAVLFSNDAFGQHYCDEHLFNDEVDQTELMEQCQRYYANILTPFSPLVTAKIKEVLGFNLPVSMVATSHGIVWRDDPTQIILKYLEWADHYQEDRITLFYDSMSNNTRMMADAIAQGIHEVDPGVAVKIYNVARHDKNEILTQVFRSKGVLVGSSTMNNVMMPKVAGMLEEITGLRFRNKRASAFGSYGWTGGAVDRIQTRLMDAGFDISISLKAKWRPDGSALALCREHGRQLARQWALHPLEAPCPIITTSAAAAPVVEAGVVVEMSVPASAGVVEVGVPAFSGAMELPVSRGVAPTTCEQDDDQPMLCTVCQWIYDPALGEPDQLVAPGTPWARVPDSFLCPGCGIGKEVFEPCAVEACV</sequence>
<keyword id="KW-0963">Cytoplasm</keyword>
<keyword id="KW-0249">Electron transport</keyword>
<keyword id="KW-0285">Flavoprotein</keyword>
<keyword id="KW-0288">FMN</keyword>
<keyword id="KW-0408">Iron</keyword>
<keyword id="KW-0479">Metal-binding</keyword>
<keyword id="KW-0560">Oxidoreductase</keyword>
<keyword id="KW-0813">Transport</keyword>
<name>NORV_AERS4</name>
<dbReference type="EMBL" id="CP000644">
    <property type="protein sequence ID" value="ABO92196.1"/>
    <property type="molecule type" value="Genomic_DNA"/>
</dbReference>
<dbReference type="RefSeq" id="WP_005320624.1">
    <property type="nucleotide sequence ID" value="NC_009348.1"/>
</dbReference>
<dbReference type="SMR" id="A4STH4"/>
<dbReference type="STRING" id="29491.GCA_000820065_02824"/>
<dbReference type="KEGG" id="asa:ASA_4272"/>
<dbReference type="PATRIC" id="fig|382245.13.peg.4236"/>
<dbReference type="eggNOG" id="COG0426">
    <property type="taxonomic scope" value="Bacteria"/>
</dbReference>
<dbReference type="eggNOG" id="COG1773">
    <property type="taxonomic scope" value="Bacteria"/>
</dbReference>
<dbReference type="HOGENOM" id="CLU_017490_0_1_6"/>
<dbReference type="UniPathway" id="UPA00638"/>
<dbReference type="Proteomes" id="UP000000225">
    <property type="component" value="Chromosome"/>
</dbReference>
<dbReference type="GO" id="GO:0005737">
    <property type="term" value="C:cytoplasm"/>
    <property type="evidence" value="ECO:0007669"/>
    <property type="project" value="UniProtKB-SubCell"/>
</dbReference>
<dbReference type="GO" id="GO:0009055">
    <property type="term" value="F:electron transfer activity"/>
    <property type="evidence" value="ECO:0007669"/>
    <property type="project" value="UniProtKB-UniRule"/>
</dbReference>
<dbReference type="GO" id="GO:0010181">
    <property type="term" value="F:FMN binding"/>
    <property type="evidence" value="ECO:0007669"/>
    <property type="project" value="InterPro"/>
</dbReference>
<dbReference type="GO" id="GO:0005506">
    <property type="term" value="F:iron ion binding"/>
    <property type="evidence" value="ECO:0007669"/>
    <property type="project" value="InterPro"/>
</dbReference>
<dbReference type="GO" id="GO:0016966">
    <property type="term" value="F:nitric oxide reductase activity"/>
    <property type="evidence" value="ECO:0007669"/>
    <property type="project" value="InterPro"/>
</dbReference>
<dbReference type="CDD" id="cd07709">
    <property type="entry name" value="flavodiiron_proteins_MBL-fold"/>
    <property type="match status" value="1"/>
</dbReference>
<dbReference type="CDD" id="cd00730">
    <property type="entry name" value="rubredoxin"/>
    <property type="match status" value="1"/>
</dbReference>
<dbReference type="Gene3D" id="2.20.28.10">
    <property type="match status" value="1"/>
</dbReference>
<dbReference type="Gene3D" id="3.40.50.360">
    <property type="match status" value="1"/>
</dbReference>
<dbReference type="Gene3D" id="3.60.15.10">
    <property type="entry name" value="Ribonuclease Z/Hydroxyacylglutathione hydrolase-like"/>
    <property type="match status" value="1"/>
</dbReference>
<dbReference type="HAMAP" id="MF_01312">
    <property type="entry name" value="NorV"/>
    <property type="match status" value="1"/>
</dbReference>
<dbReference type="InterPro" id="IPR023957">
    <property type="entry name" value="Anaer_NO_rdtase_flvorubredoxin"/>
</dbReference>
<dbReference type="InterPro" id="IPR008254">
    <property type="entry name" value="Flavodoxin/NO_synth"/>
</dbReference>
<dbReference type="InterPro" id="IPR029039">
    <property type="entry name" value="Flavoprotein-like_sf"/>
</dbReference>
<dbReference type="InterPro" id="IPR001279">
    <property type="entry name" value="Metallo-B-lactamas"/>
</dbReference>
<dbReference type="InterPro" id="IPR045761">
    <property type="entry name" value="ODP_dom"/>
</dbReference>
<dbReference type="InterPro" id="IPR036866">
    <property type="entry name" value="RibonucZ/Hydroxyglut_hydro"/>
</dbReference>
<dbReference type="InterPro" id="IPR024934">
    <property type="entry name" value="Rubredoxin-like_dom"/>
</dbReference>
<dbReference type="InterPro" id="IPR024935">
    <property type="entry name" value="Rubredoxin_dom"/>
</dbReference>
<dbReference type="NCBIfam" id="NF003954">
    <property type="entry name" value="PRK05452.1"/>
    <property type="match status" value="1"/>
</dbReference>
<dbReference type="PANTHER" id="PTHR43717">
    <property type="entry name" value="ANAEROBIC NITRIC OXIDE REDUCTASE FLAVORUBREDOXIN"/>
    <property type="match status" value="1"/>
</dbReference>
<dbReference type="PANTHER" id="PTHR43717:SF1">
    <property type="entry name" value="ANAEROBIC NITRIC OXIDE REDUCTASE FLAVORUBREDOXIN"/>
    <property type="match status" value="1"/>
</dbReference>
<dbReference type="Pfam" id="PF00258">
    <property type="entry name" value="Flavodoxin_1"/>
    <property type="match status" value="1"/>
</dbReference>
<dbReference type="Pfam" id="PF19583">
    <property type="entry name" value="ODP"/>
    <property type="match status" value="1"/>
</dbReference>
<dbReference type="Pfam" id="PF00301">
    <property type="entry name" value="Rubredoxin"/>
    <property type="match status" value="1"/>
</dbReference>
<dbReference type="PRINTS" id="PR00163">
    <property type="entry name" value="RUBREDOXIN"/>
</dbReference>
<dbReference type="SMART" id="SM00849">
    <property type="entry name" value="Lactamase_B"/>
    <property type="match status" value="1"/>
</dbReference>
<dbReference type="SUPFAM" id="SSF52218">
    <property type="entry name" value="Flavoproteins"/>
    <property type="match status" value="1"/>
</dbReference>
<dbReference type="SUPFAM" id="SSF56281">
    <property type="entry name" value="Metallo-hydrolase/oxidoreductase"/>
    <property type="match status" value="1"/>
</dbReference>
<dbReference type="SUPFAM" id="SSF57802">
    <property type="entry name" value="Rubredoxin-like"/>
    <property type="match status" value="1"/>
</dbReference>
<dbReference type="PROSITE" id="PS50902">
    <property type="entry name" value="FLAVODOXIN_LIKE"/>
    <property type="match status" value="1"/>
</dbReference>
<dbReference type="PROSITE" id="PS50903">
    <property type="entry name" value="RUBREDOXIN_LIKE"/>
    <property type="match status" value="1"/>
</dbReference>
<accession>A4STH4</accession>
<feature type="chain" id="PRO_0000305590" description="Anaerobic nitric oxide reductase flavorubredoxin">
    <location>
        <begin position="1"/>
        <end position="521"/>
    </location>
</feature>
<feature type="domain" description="Flavodoxin-like" evidence="1">
    <location>
        <begin position="254"/>
        <end position="393"/>
    </location>
</feature>
<feature type="domain" description="Rubredoxin-like" evidence="1">
    <location>
        <begin position="464"/>
        <end position="515"/>
    </location>
</feature>
<feature type="region of interest" description="Zinc metallo-hydrolase">
    <location>
        <begin position="30"/>
        <end position="210"/>
    </location>
</feature>
<feature type="binding site" evidence="1">
    <location>
        <position position="79"/>
    </location>
    <ligand>
        <name>Fe cation</name>
        <dbReference type="ChEBI" id="CHEBI:24875"/>
        <label>1</label>
    </ligand>
</feature>
<feature type="binding site" evidence="1">
    <location>
        <position position="81"/>
    </location>
    <ligand>
        <name>Fe cation</name>
        <dbReference type="ChEBI" id="CHEBI:24875"/>
        <label>1</label>
    </ligand>
</feature>
<feature type="binding site" evidence="1">
    <location>
        <position position="83"/>
    </location>
    <ligand>
        <name>Fe cation</name>
        <dbReference type="ChEBI" id="CHEBI:24875"/>
        <label>2</label>
    </ligand>
</feature>
<feature type="binding site" evidence="1">
    <location>
        <position position="147"/>
    </location>
    <ligand>
        <name>Fe cation</name>
        <dbReference type="ChEBI" id="CHEBI:24875"/>
        <label>1</label>
    </ligand>
</feature>
<feature type="binding site" evidence="1">
    <location>
        <position position="166"/>
    </location>
    <ligand>
        <name>Fe cation</name>
        <dbReference type="ChEBI" id="CHEBI:24875"/>
        <label>1</label>
    </ligand>
</feature>
<feature type="binding site" evidence="1">
    <location>
        <position position="166"/>
    </location>
    <ligand>
        <name>Fe cation</name>
        <dbReference type="ChEBI" id="CHEBI:24875"/>
        <label>2</label>
    </ligand>
</feature>
<feature type="binding site" evidence="1">
    <location>
        <position position="227"/>
    </location>
    <ligand>
        <name>Fe cation</name>
        <dbReference type="ChEBI" id="CHEBI:24875"/>
        <label>2</label>
    </ligand>
</feature>
<feature type="binding site" evidence="1">
    <location>
        <begin position="260"/>
        <end position="264"/>
    </location>
    <ligand>
        <name>FMN</name>
        <dbReference type="ChEBI" id="CHEBI:58210"/>
    </ligand>
</feature>
<feature type="binding site" evidence="1">
    <location>
        <begin position="342"/>
        <end position="369"/>
    </location>
    <ligand>
        <name>FMN</name>
        <dbReference type="ChEBI" id="CHEBI:58210"/>
    </ligand>
</feature>
<feature type="binding site" evidence="1">
    <location>
        <position position="469"/>
    </location>
    <ligand>
        <name>Fe cation</name>
        <dbReference type="ChEBI" id="CHEBI:24875"/>
        <label>3</label>
    </ligand>
</feature>
<feature type="binding site" evidence="1">
    <location>
        <position position="472"/>
    </location>
    <ligand>
        <name>Fe cation</name>
        <dbReference type="ChEBI" id="CHEBI:24875"/>
        <label>3</label>
    </ligand>
</feature>
<feature type="binding site" evidence="1">
    <location>
        <position position="502"/>
    </location>
    <ligand>
        <name>Fe cation</name>
        <dbReference type="ChEBI" id="CHEBI:24875"/>
        <label>3</label>
    </ligand>
</feature>
<feature type="binding site" evidence="1">
    <location>
        <position position="505"/>
    </location>
    <ligand>
        <name>Fe cation</name>
        <dbReference type="ChEBI" id="CHEBI:24875"/>
        <label>3</label>
    </ligand>
</feature>